<keyword id="KW-0150">Chloroplast</keyword>
<keyword id="KW-0934">Plastid</keyword>
<keyword id="KW-0687">Ribonucleoprotein</keyword>
<keyword id="KW-0689">Ribosomal protein</keyword>
<accession>Q85X64</accession>
<geneLocation type="chloroplast"/>
<dbReference type="EMBL" id="AY228468">
    <property type="protein sequence ID" value="AAO73999.2"/>
    <property type="status" value="ALT_INIT"/>
    <property type="molecule type" value="Genomic_DNA"/>
</dbReference>
<dbReference type="RefSeq" id="NP_817151.2">
    <property type="nucleotide sequence ID" value="NC_004677.2"/>
</dbReference>
<dbReference type="SMR" id="Q85X64"/>
<dbReference type="GeneID" id="806943"/>
<dbReference type="GO" id="GO:0009507">
    <property type="term" value="C:chloroplast"/>
    <property type="evidence" value="ECO:0007669"/>
    <property type="project" value="UniProtKB-SubCell"/>
</dbReference>
<dbReference type="GO" id="GO:0005763">
    <property type="term" value="C:mitochondrial small ribosomal subunit"/>
    <property type="evidence" value="ECO:0007669"/>
    <property type="project" value="TreeGrafter"/>
</dbReference>
<dbReference type="GO" id="GO:0003735">
    <property type="term" value="F:structural constituent of ribosome"/>
    <property type="evidence" value="ECO:0007669"/>
    <property type="project" value="InterPro"/>
</dbReference>
<dbReference type="GO" id="GO:0006412">
    <property type="term" value="P:translation"/>
    <property type="evidence" value="ECO:0007669"/>
    <property type="project" value="UniProtKB-UniRule"/>
</dbReference>
<dbReference type="CDD" id="cd01425">
    <property type="entry name" value="RPS2"/>
    <property type="match status" value="1"/>
</dbReference>
<dbReference type="FunFam" id="1.10.287.610:FF:000001">
    <property type="entry name" value="30S ribosomal protein S2"/>
    <property type="match status" value="1"/>
</dbReference>
<dbReference type="Gene3D" id="3.40.50.10490">
    <property type="entry name" value="Glucose-6-phosphate isomerase like protein, domain 1"/>
    <property type="match status" value="1"/>
</dbReference>
<dbReference type="Gene3D" id="1.10.287.610">
    <property type="entry name" value="Helix hairpin bin"/>
    <property type="match status" value="1"/>
</dbReference>
<dbReference type="HAMAP" id="MF_00291_B">
    <property type="entry name" value="Ribosomal_uS2_B"/>
    <property type="match status" value="1"/>
</dbReference>
<dbReference type="InterPro" id="IPR001865">
    <property type="entry name" value="Ribosomal_uS2"/>
</dbReference>
<dbReference type="InterPro" id="IPR005706">
    <property type="entry name" value="Ribosomal_uS2_bac/mit/plastid"/>
</dbReference>
<dbReference type="InterPro" id="IPR018130">
    <property type="entry name" value="Ribosomal_uS2_CS"/>
</dbReference>
<dbReference type="InterPro" id="IPR023591">
    <property type="entry name" value="Ribosomal_uS2_flav_dom_sf"/>
</dbReference>
<dbReference type="NCBIfam" id="TIGR01011">
    <property type="entry name" value="rpsB_bact"/>
    <property type="match status" value="1"/>
</dbReference>
<dbReference type="PANTHER" id="PTHR12534">
    <property type="entry name" value="30S RIBOSOMAL PROTEIN S2 PROKARYOTIC AND ORGANELLAR"/>
    <property type="match status" value="1"/>
</dbReference>
<dbReference type="PANTHER" id="PTHR12534:SF0">
    <property type="entry name" value="SMALL RIBOSOMAL SUBUNIT PROTEIN US2M"/>
    <property type="match status" value="1"/>
</dbReference>
<dbReference type="Pfam" id="PF00318">
    <property type="entry name" value="Ribosomal_S2"/>
    <property type="match status" value="1"/>
</dbReference>
<dbReference type="PRINTS" id="PR00395">
    <property type="entry name" value="RIBOSOMALS2"/>
</dbReference>
<dbReference type="SUPFAM" id="SSF52313">
    <property type="entry name" value="Ribosomal protein S2"/>
    <property type="match status" value="1"/>
</dbReference>
<dbReference type="PROSITE" id="PS00962">
    <property type="entry name" value="RIBOSOMAL_S2_1"/>
    <property type="match status" value="1"/>
</dbReference>
<proteinExistence type="inferred from homology"/>
<reference key="1">
    <citation type="submission" date="2003-02" db="EMBL/GenBank/DDBJ databases">
        <title>Complete nucleotide sequence of Pinus koraiensis.</title>
        <authorList>
            <person name="Noh E.W."/>
            <person name="Lee J.S."/>
            <person name="Choi Y.I."/>
            <person name="Han M.S."/>
            <person name="Yi Y.S."/>
            <person name="Han S.U."/>
        </authorList>
    </citation>
    <scope>NUCLEOTIDE SEQUENCE [LARGE SCALE GENOMIC DNA]</scope>
    <source>
        <strain>KangWon16</strain>
    </source>
</reference>
<gene>
    <name type="primary">rps2</name>
</gene>
<feature type="chain" id="PRO_0000352150" description="Small ribosomal subunit protein uS2c">
    <location>
        <begin position="1"/>
        <end position="234"/>
    </location>
</feature>
<sequence>MSKRYWNIDLEEMMEARVHLGHKTRKWNPKMAPYIFTERKDTHIINLAKTARSLSEACDLVFDIAGRGKQFLIVGTKYQATDLVASAATEARCHYVNRKWLGGMLTNWSTTETRLQKFKDLKKEQDTGRFNQLPKKEAAMLKRQLDQLQKYLGGIRYMRSLPDIAIITNQREESIALGECRTLGIPTICLVDTDCDPDLVDIPIPANDDGIASIQLILNRLTSAICEGRALRSL</sequence>
<protein>
    <recommendedName>
        <fullName evidence="1">Small ribosomal subunit protein uS2c</fullName>
    </recommendedName>
    <alternativeName>
        <fullName>30S ribosomal protein S2, chloroplastic</fullName>
    </alternativeName>
</protein>
<organism>
    <name type="scientific">Pinus koraiensis</name>
    <name type="common">Korean pine</name>
    <dbReference type="NCBI Taxonomy" id="88728"/>
    <lineage>
        <taxon>Eukaryota</taxon>
        <taxon>Viridiplantae</taxon>
        <taxon>Streptophyta</taxon>
        <taxon>Embryophyta</taxon>
        <taxon>Tracheophyta</taxon>
        <taxon>Spermatophyta</taxon>
        <taxon>Pinopsida</taxon>
        <taxon>Pinidae</taxon>
        <taxon>Conifers I</taxon>
        <taxon>Pinales</taxon>
        <taxon>Pinaceae</taxon>
        <taxon>Pinus</taxon>
        <taxon>Pinus subgen. Strobus</taxon>
    </lineage>
</organism>
<name>RR2_PINKO</name>
<evidence type="ECO:0000305" key="1"/>
<comment type="subcellular location">
    <subcellularLocation>
        <location>Plastid</location>
        <location>Chloroplast</location>
    </subcellularLocation>
</comment>
<comment type="similarity">
    <text evidence="1">Belongs to the universal ribosomal protein uS2 family.</text>
</comment>
<comment type="sequence caution" evidence="1">
    <conflict type="erroneous initiation">
        <sequence resource="EMBL-CDS" id="AAO73999"/>
    </conflict>
</comment>